<comment type="function">
    <text evidence="1">Bidirectionally degrades single-stranded DNA into large acid-insoluble oligonucleotides, which are then degraded further into small acid-soluble oligonucleotides.</text>
</comment>
<comment type="catalytic activity">
    <reaction evidence="1">
        <text>Exonucleolytic cleavage in either 5'- to 3'- or 3'- to 5'-direction to yield nucleoside 5'-phosphates.</text>
        <dbReference type="EC" id="3.1.11.6"/>
    </reaction>
</comment>
<comment type="subunit">
    <text evidence="1">Heterooligomer composed of large and small subunits.</text>
</comment>
<comment type="subcellular location">
    <subcellularLocation>
        <location evidence="1">Cytoplasm</location>
    </subcellularLocation>
</comment>
<comment type="similarity">
    <text evidence="1">Belongs to the XseA family.</text>
</comment>
<reference key="1">
    <citation type="submission" date="2002-12" db="EMBL/GenBank/DDBJ databases">
        <title>Complete genome sequence of Vibrio vulnificus CMCP6.</title>
        <authorList>
            <person name="Rhee J.H."/>
            <person name="Kim S.Y."/>
            <person name="Chung S.S."/>
            <person name="Kim J.J."/>
            <person name="Moon Y.H."/>
            <person name="Jeong H."/>
            <person name="Choy H.E."/>
        </authorList>
    </citation>
    <scope>NUCLEOTIDE SEQUENCE [LARGE SCALE GENOMIC DNA]</scope>
    <source>
        <strain>CMCP6</strain>
    </source>
</reference>
<protein>
    <recommendedName>
        <fullName evidence="1">Exodeoxyribonuclease 7 large subunit</fullName>
        <ecNumber evidence="1">3.1.11.6</ecNumber>
    </recommendedName>
    <alternativeName>
        <fullName evidence="1">Exodeoxyribonuclease VII large subunit</fullName>
        <shortName evidence="1">Exonuclease VII large subunit</shortName>
    </alternativeName>
</protein>
<sequence length="443" mass="49727">MSSLTNPNIFTVSRLNSEVRLLLENQLGIVWLVGEISNFSAPVSGHWYFTLKDSMAQVKCAMFRGNNRLVSFKPTNGNQVLVKARLSLYEPRGDYQLIIESMQPEGDGRLQQQFDALKMKLASEGLFAQSSKQAIPEHPKCVGIITSKTGAALYDILDVLKRRDPSLPVVIYPTLVQGEEAAIQIAQAIGRANSRNECDVLIVGRGGGSLEDLWCFNNEIVARTIAASQIPIISAVGHEIDVTIADFVADLRAPTPSAAAELVSRDNSHKDQALMSREQKLRAAWRHYLTEQNRTIVSLSHRLEKQHPRYRLMRQTQQADELQIRLQRAMEKYLAQREQKVSRVQHKLQLLSPVRQISEQKNALARVEQKMMDAMDRKLLRLRHQIAIAAEKLDTVSPLATLKRGYSITQSESGDVITRQSQIKTGDTLVTRLSDGEIRSTVN</sequence>
<proteinExistence type="inferred from homology"/>
<accession>Q8DF05</accession>
<gene>
    <name evidence="1" type="primary">xseA</name>
    <name type="ordered locus">VV1_0420</name>
</gene>
<name>EX7L_VIBVU</name>
<feature type="chain" id="PRO_0000197901" description="Exodeoxyribonuclease 7 large subunit">
    <location>
        <begin position="1"/>
        <end position="443"/>
    </location>
</feature>
<evidence type="ECO:0000255" key="1">
    <source>
        <dbReference type="HAMAP-Rule" id="MF_00378"/>
    </source>
</evidence>
<keyword id="KW-0963">Cytoplasm</keyword>
<keyword id="KW-0269">Exonuclease</keyword>
<keyword id="KW-0378">Hydrolase</keyword>
<keyword id="KW-0540">Nuclease</keyword>
<dbReference type="EC" id="3.1.11.6" evidence="1"/>
<dbReference type="EMBL" id="AE016795">
    <property type="protein sequence ID" value="AAO08943.1"/>
    <property type="molecule type" value="Genomic_DNA"/>
</dbReference>
<dbReference type="RefSeq" id="WP_011078518.1">
    <property type="nucleotide sequence ID" value="NC_004459.3"/>
</dbReference>
<dbReference type="SMR" id="Q8DF05"/>
<dbReference type="KEGG" id="vvu:VV1_0420"/>
<dbReference type="HOGENOM" id="CLU_023625_3_1_6"/>
<dbReference type="Proteomes" id="UP000002275">
    <property type="component" value="Chromosome 1"/>
</dbReference>
<dbReference type="GO" id="GO:0005737">
    <property type="term" value="C:cytoplasm"/>
    <property type="evidence" value="ECO:0007669"/>
    <property type="project" value="UniProtKB-SubCell"/>
</dbReference>
<dbReference type="GO" id="GO:0009318">
    <property type="term" value="C:exodeoxyribonuclease VII complex"/>
    <property type="evidence" value="ECO:0007669"/>
    <property type="project" value="InterPro"/>
</dbReference>
<dbReference type="GO" id="GO:0008855">
    <property type="term" value="F:exodeoxyribonuclease VII activity"/>
    <property type="evidence" value="ECO:0007669"/>
    <property type="project" value="UniProtKB-UniRule"/>
</dbReference>
<dbReference type="GO" id="GO:0003676">
    <property type="term" value="F:nucleic acid binding"/>
    <property type="evidence" value="ECO:0007669"/>
    <property type="project" value="InterPro"/>
</dbReference>
<dbReference type="GO" id="GO:0006308">
    <property type="term" value="P:DNA catabolic process"/>
    <property type="evidence" value="ECO:0007669"/>
    <property type="project" value="UniProtKB-UniRule"/>
</dbReference>
<dbReference type="CDD" id="cd04489">
    <property type="entry name" value="ExoVII_LU_OBF"/>
    <property type="match status" value="1"/>
</dbReference>
<dbReference type="HAMAP" id="MF_00378">
    <property type="entry name" value="Exonuc_7_L"/>
    <property type="match status" value="1"/>
</dbReference>
<dbReference type="InterPro" id="IPR003753">
    <property type="entry name" value="Exonuc_VII_L"/>
</dbReference>
<dbReference type="InterPro" id="IPR020579">
    <property type="entry name" value="Exonuc_VII_lsu_C"/>
</dbReference>
<dbReference type="InterPro" id="IPR025824">
    <property type="entry name" value="OB-fold_nuc-bd_dom"/>
</dbReference>
<dbReference type="NCBIfam" id="TIGR00237">
    <property type="entry name" value="xseA"/>
    <property type="match status" value="1"/>
</dbReference>
<dbReference type="PANTHER" id="PTHR30008">
    <property type="entry name" value="EXODEOXYRIBONUCLEASE 7 LARGE SUBUNIT"/>
    <property type="match status" value="1"/>
</dbReference>
<dbReference type="PANTHER" id="PTHR30008:SF0">
    <property type="entry name" value="EXODEOXYRIBONUCLEASE 7 LARGE SUBUNIT"/>
    <property type="match status" value="1"/>
</dbReference>
<dbReference type="Pfam" id="PF02601">
    <property type="entry name" value="Exonuc_VII_L"/>
    <property type="match status" value="1"/>
</dbReference>
<dbReference type="Pfam" id="PF13742">
    <property type="entry name" value="tRNA_anti_2"/>
    <property type="match status" value="1"/>
</dbReference>
<organism>
    <name type="scientific">Vibrio vulnificus (strain CMCP6)</name>
    <dbReference type="NCBI Taxonomy" id="216895"/>
    <lineage>
        <taxon>Bacteria</taxon>
        <taxon>Pseudomonadati</taxon>
        <taxon>Pseudomonadota</taxon>
        <taxon>Gammaproteobacteria</taxon>
        <taxon>Vibrionales</taxon>
        <taxon>Vibrionaceae</taxon>
        <taxon>Vibrio</taxon>
    </lineage>
</organism>